<organism>
    <name type="scientific">Phytoplasma australiense</name>
    <dbReference type="NCBI Taxonomy" id="59748"/>
    <lineage>
        <taxon>Bacteria</taxon>
        <taxon>Bacillati</taxon>
        <taxon>Mycoplasmatota</taxon>
        <taxon>Mollicutes</taxon>
        <taxon>Acholeplasmatales</taxon>
        <taxon>Acholeplasmataceae</taxon>
        <taxon>Candidatus Phytoplasma</taxon>
        <taxon>16SrXII (Stolbur group)</taxon>
    </lineage>
</organism>
<dbReference type="EC" id="2.7.2.1" evidence="1"/>
<dbReference type="EMBL" id="AM422018">
    <property type="protein sequence ID" value="CAM11456.1"/>
    <property type="molecule type" value="Genomic_DNA"/>
</dbReference>
<dbReference type="SMR" id="B1V924"/>
<dbReference type="STRING" id="59748.PA0121"/>
<dbReference type="KEGG" id="pal:PA0121"/>
<dbReference type="eggNOG" id="COG0282">
    <property type="taxonomic scope" value="Bacteria"/>
</dbReference>
<dbReference type="UniPathway" id="UPA00340">
    <property type="reaction ID" value="UER00458"/>
</dbReference>
<dbReference type="Proteomes" id="UP000008323">
    <property type="component" value="Chromosome"/>
</dbReference>
<dbReference type="GO" id="GO:0005737">
    <property type="term" value="C:cytoplasm"/>
    <property type="evidence" value="ECO:0007669"/>
    <property type="project" value="UniProtKB-SubCell"/>
</dbReference>
<dbReference type="GO" id="GO:0008776">
    <property type="term" value="F:acetate kinase activity"/>
    <property type="evidence" value="ECO:0007669"/>
    <property type="project" value="UniProtKB-UniRule"/>
</dbReference>
<dbReference type="GO" id="GO:0005524">
    <property type="term" value="F:ATP binding"/>
    <property type="evidence" value="ECO:0007669"/>
    <property type="project" value="UniProtKB-KW"/>
</dbReference>
<dbReference type="GO" id="GO:0000287">
    <property type="term" value="F:magnesium ion binding"/>
    <property type="evidence" value="ECO:0007669"/>
    <property type="project" value="UniProtKB-UniRule"/>
</dbReference>
<dbReference type="GO" id="GO:0006083">
    <property type="term" value="P:acetate metabolic process"/>
    <property type="evidence" value="ECO:0007669"/>
    <property type="project" value="TreeGrafter"/>
</dbReference>
<dbReference type="GO" id="GO:0006085">
    <property type="term" value="P:acetyl-CoA biosynthetic process"/>
    <property type="evidence" value="ECO:0007669"/>
    <property type="project" value="UniProtKB-UniRule"/>
</dbReference>
<dbReference type="CDD" id="cd24010">
    <property type="entry name" value="ASKHA_NBD_AcK_PK"/>
    <property type="match status" value="1"/>
</dbReference>
<dbReference type="Gene3D" id="3.30.420.40">
    <property type="match status" value="2"/>
</dbReference>
<dbReference type="HAMAP" id="MF_00020">
    <property type="entry name" value="Acetate_kinase"/>
    <property type="match status" value="1"/>
</dbReference>
<dbReference type="InterPro" id="IPR004372">
    <property type="entry name" value="Ac/propionate_kinase"/>
</dbReference>
<dbReference type="InterPro" id="IPR000890">
    <property type="entry name" value="Aliphatic_acid_kin_short-chain"/>
</dbReference>
<dbReference type="InterPro" id="IPR023865">
    <property type="entry name" value="Aliphatic_acid_kinase_CS"/>
</dbReference>
<dbReference type="InterPro" id="IPR043129">
    <property type="entry name" value="ATPase_NBD"/>
</dbReference>
<dbReference type="NCBIfam" id="TIGR00016">
    <property type="entry name" value="ackA"/>
    <property type="match status" value="1"/>
</dbReference>
<dbReference type="PANTHER" id="PTHR21060">
    <property type="entry name" value="ACETATE KINASE"/>
    <property type="match status" value="1"/>
</dbReference>
<dbReference type="PANTHER" id="PTHR21060:SF15">
    <property type="entry name" value="ACETATE KINASE-RELATED"/>
    <property type="match status" value="1"/>
</dbReference>
<dbReference type="Pfam" id="PF00871">
    <property type="entry name" value="Acetate_kinase"/>
    <property type="match status" value="1"/>
</dbReference>
<dbReference type="PIRSF" id="PIRSF000722">
    <property type="entry name" value="Acetate_prop_kin"/>
    <property type="match status" value="1"/>
</dbReference>
<dbReference type="PRINTS" id="PR00471">
    <property type="entry name" value="ACETATEKNASE"/>
</dbReference>
<dbReference type="SUPFAM" id="SSF53067">
    <property type="entry name" value="Actin-like ATPase domain"/>
    <property type="match status" value="2"/>
</dbReference>
<dbReference type="PROSITE" id="PS01075">
    <property type="entry name" value="ACETATE_KINASE_1"/>
    <property type="match status" value="1"/>
</dbReference>
<dbReference type="PROSITE" id="PS01076">
    <property type="entry name" value="ACETATE_KINASE_2"/>
    <property type="match status" value="1"/>
</dbReference>
<name>ACKA_PHYAS</name>
<protein>
    <recommendedName>
        <fullName evidence="1">Acetate kinase</fullName>
        <ecNumber evidence="1">2.7.2.1</ecNumber>
    </recommendedName>
    <alternativeName>
        <fullName evidence="1">Acetokinase</fullName>
    </alternativeName>
</protein>
<keyword id="KW-0067">ATP-binding</keyword>
<keyword id="KW-0963">Cytoplasm</keyword>
<keyword id="KW-0418">Kinase</keyword>
<keyword id="KW-0460">Magnesium</keyword>
<keyword id="KW-0479">Metal-binding</keyword>
<keyword id="KW-0547">Nucleotide-binding</keyword>
<keyword id="KW-1185">Reference proteome</keyword>
<keyword id="KW-0808">Transferase</keyword>
<reference key="1">
    <citation type="journal article" date="2008" name="J. Bacteriol.">
        <title>Comparative genome analysis of 'Candidatus Phytoplasma australiense' (subgroup tuf-Australia I; rp-A) and 'Ca. Phytoplasma asteris' strains OY-M and AY-WB.</title>
        <authorList>
            <person name="Tran-Nguyen L.T."/>
            <person name="Kube M."/>
            <person name="Schneider B."/>
            <person name="Reinhardt R."/>
            <person name="Gibb K.S."/>
        </authorList>
    </citation>
    <scope>NUCLEOTIDE SEQUENCE [LARGE SCALE GENOMIC DNA]</scope>
</reference>
<accession>B1V924</accession>
<feature type="chain" id="PRO_1000116391" description="Acetate kinase">
    <location>
        <begin position="1"/>
        <end position="396"/>
    </location>
</feature>
<feature type="active site" description="Proton donor/acceptor" evidence="1">
    <location>
        <position position="145"/>
    </location>
</feature>
<feature type="binding site" evidence="1">
    <location>
        <position position="7"/>
    </location>
    <ligand>
        <name>Mg(2+)</name>
        <dbReference type="ChEBI" id="CHEBI:18420"/>
    </ligand>
</feature>
<feature type="binding site" evidence="1">
    <location>
        <position position="14"/>
    </location>
    <ligand>
        <name>ATP</name>
        <dbReference type="ChEBI" id="CHEBI:30616"/>
    </ligand>
</feature>
<feature type="binding site" evidence="1">
    <location>
        <position position="88"/>
    </location>
    <ligand>
        <name>substrate</name>
    </ligand>
</feature>
<feature type="binding site" evidence="1">
    <location>
        <begin position="203"/>
        <end position="207"/>
    </location>
    <ligand>
        <name>ATP</name>
        <dbReference type="ChEBI" id="CHEBI:30616"/>
    </ligand>
</feature>
<feature type="binding site" evidence="1">
    <location>
        <begin position="278"/>
        <end position="280"/>
    </location>
    <ligand>
        <name>ATP</name>
        <dbReference type="ChEBI" id="CHEBI:30616"/>
    </ligand>
</feature>
<feature type="binding site" evidence="1">
    <location>
        <begin position="326"/>
        <end position="330"/>
    </location>
    <ligand>
        <name>ATP</name>
        <dbReference type="ChEBI" id="CHEBI:30616"/>
    </ligand>
</feature>
<feature type="binding site" evidence="1">
    <location>
        <position position="379"/>
    </location>
    <ligand>
        <name>Mg(2+)</name>
        <dbReference type="ChEBI" id="CHEBI:18420"/>
    </ligand>
</feature>
<feature type="site" description="Transition state stabilizer" evidence="1">
    <location>
        <position position="177"/>
    </location>
</feature>
<feature type="site" description="Transition state stabilizer" evidence="1">
    <location>
        <position position="236"/>
    </location>
</feature>
<evidence type="ECO:0000255" key="1">
    <source>
        <dbReference type="HAMAP-Rule" id="MF_00020"/>
    </source>
</evidence>
<comment type="function">
    <text evidence="1">Catalyzes the formation of acetyl phosphate from acetate and ATP. Can also catalyze the reverse reaction.</text>
</comment>
<comment type="catalytic activity">
    <reaction evidence="1">
        <text>acetate + ATP = acetyl phosphate + ADP</text>
        <dbReference type="Rhea" id="RHEA:11352"/>
        <dbReference type="ChEBI" id="CHEBI:22191"/>
        <dbReference type="ChEBI" id="CHEBI:30089"/>
        <dbReference type="ChEBI" id="CHEBI:30616"/>
        <dbReference type="ChEBI" id="CHEBI:456216"/>
        <dbReference type="EC" id="2.7.2.1"/>
    </reaction>
</comment>
<comment type="cofactor">
    <cofactor evidence="1">
        <name>Mg(2+)</name>
        <dbReference type="ChEBI" id="CHEBI:18420"/>
    </cofactor>
    <cofactor evidence="1">
        <name>Mn(2+)</name>
        <dbReference type="ChEBI" id="CHEBI:29035"/>
    </cofactor>
    <text evidence="1">Mg(2+). Can also accept Mn(2+).</text>
</comment>
<comment type="pathway">
    <text evidence="1">Metabolic intermediate biosynthesis; acetyl-CoA biosynthesis; acetyl-CoA from acetate: step 1/2.</text>
</comment>
<comment type="subunit">
    <text evidence="1">Homodimer.</text>
</comment>
<comment type="subcellular location">
    <subcellularLocation>
        <location evidence="1">Cytoplasm</location>
    </subcellularLocation>
</comment>
<comment type="similarity">
    <text evidence="1">Belongs to the acetokinase family.</text>
</comment>
<sequence>MKIMSVNSGSSSLKFQLLEMPQKNLITSGLIERIGSNNATFTLKNQNHKTSKTLEIKNHQQAVSLLLTSLIENKIIARLEDIDGVGHRIVQGGELFQDATALNDVEIAKIESLCDLAPLHNPANLVSIKAFRQVLPSLFQVGVFDTTFHQTIPVKNFLYATPYAWYQKYKVRKYGFHGISYQYITEQMQQLLNKKDAKLIICHAGNGVSLCAVDSGKSIDTSMGFTPLEGVPMGTRSGNIDPAVIKFIAEKENKGIAEITDDLNKKSGLLGVSTISNDARDILAEIKKGNPQARLAFDIQIKRIVDYIASYYVLLKGIDALVFTAGIGENSSFFRSEIIKRLSVLGFRLDEQKNEVQGKTSVITSSDSLQQAFVVPTNEELSIACDVLRIYKKVKK</sequence>
<proteinExistence type="inferred from homology"/>
<gene>
    <name evidence="1" type="primary">ackA</name>
    <name type="ordered locus">PA0121</name>
</gene>